<name>GMHA_AKKM8</name>
<feature type="chain" id="PRO_1000092264" description="Phosphoheptose isomerase">
    <location>
        <begin position="1"/>
        <end position="189"/>
    </location>
</feature>
<feature type="domain" description="SIS" evidence="1">
    <location>
        <begin position="33"/>
        <end position="189"/>
    </location>
</feature>
<feature type="binding site" evidence="1">
    <location>
        <begin position="48"/>
        <end position="50"/>
    </location>
    <ligand>
        <name>substrate</name>
    </ligand>
</feature>
<feature type="binding site" evidence="1">
    <location>
        <position position="57"/>
    </location>
    <ligand>
        <name>Zn(2+)</name>
        <dbReference type="ChEBI" id="CHEBI:29105"/>
    </ligand>
</feature>
<feature type="binding site" evidence="1">
    <location>
        <position position="61"/>
    </location>
    <ligand>
        <name>substrate</name>
    </ligand>
</feature>
<feature type="binding site" evidence="1">
    <location>
        <position position="61"/>
    </location>
    <ligand>
        <name>Zn(2+)</name>
        <dbReference type="ChEBI" id="CHEBI:29105"/>
    </ligand>
</feature>
<feature type="binding site" evidence="1">
    <location>
        <begin position="90"/>
        <end position="91"/>
    </location>
    <ligand>
        <name>substrate</name>
    </ligand>
</feature>
<feature type="binding site" evidence="1">
    <location>
        <begin position="116"/>
        <end position="118"/>
    </location>
    <ligand>
        <name>substrate</name>
    </ligand>
</feature>
<feature type="binding site" evidence="1">
    <location>
        <position position="121"/>
    </location>
    <ligand>
        <name>substrate</name>
    </ligand>
</feature>
<feature type="binding site" evidence="1">
    <location>
        <position position="168"/>
    </location>
    <ligand>
        <name>substrate</name>
    </ligand>
</feature>
<feature type="binding site" evidence="1">
    <location>
        <position position="168"/>
    </location>
    <ligand>
        <name>Zn(2+)</name>
        <dbReference type="ChEBI" id="CHEBI:29105"/>
    </ligand>
</feature>
<feature type="binding site" evidence="1">
    <location>
        <position position="176"/>
    </location>
    <ligand>
        <name>Zn(2+)</name>
        <dbReference type="ChEBI" id="CHEBI:29105"/>
    </ligand>
</feature>
<proteinExistence type="inferred from homology"/>
<organism>
    <name type="scientific">Akkermansia muciniphila (strain ATCC BAA-835 / DSM 22959 / JCM 33894 / BCRC 81048 / CCUG 64013 / CIP 107961 / Muc)</name>
    <dbReference type="NCBI Taxonomy" id="349741"/>
    <lineage>
        <taxon>Bacteria</taxon>
        <taxon>Pseudomonadati</taxon>
        <taxon>Verrucomicrobiota</taxon>
        <taxon>Verrucomicrobiia</taxon>
        <taxon>Verrucomicrobiales</taxon>
        <taxon>Akkermansiaceae</taxon>
        <taxon>Akkermansia</taxon>
    </lineage>
</organism>
<sequence>MSEYIRNQILGIADNFKALASMAGDIEQVARICTDTLKAGNKIMFCGNGGSAADSQHLAAELVGRYKLNRPAMNALALTVDTSILTAVGNDYGYETVFSRQLEGVGRPGDLLVGLSTSGNSRNIVLAMELARRMGVRTVALTGRGGGEMKEVAEFCIAVPSDATNNIQEMHIAVGHLVCELVEREIYGG</sequence>
<accession>B2UNE0</accession>
<gene>
    <name evidence="1" type="primary">gmhA</name>
    <name type="ordered locus">Amuc_0414</name>
</gene>
<evidence type="ECO:0000255" key="1">
    <source>
        <dbReference type="HAMAP-Rule" id="MF_00067"/>
    </source>
</evidence>
<keyword id="KW-0119">Carbohydrate metabolism</keyword>
<keyword id="KW-0963">Cytoplasm</keyword>
<keyword id="KW-0413">Isomerase</keyword>
<keyword id="KW-0479">Metal-binding</keyword>
<keyword id="KW-1185">Reference proteome</keyword>
<keyword id="KW-0862">Zinc</keyword>
<comment type="function">
    <text evidence="1">Catalyzes the isomerization of sedoheptulose 7-phosphate in D-glycero-D-manno-heptose 7-phosphate.</text>
</comment>
<comment type="catalytic activity">
    <reaction evidence="1">
        <text>2 D-sedoheptulose 7-phosphate = D-glycero-alpha-D-manno-heptose 7-phosphate + D-glycero-beta-D-manno-heptose 7-phosphate</text>
        <dbReference type="Rhea" id="RHEA:27489"/>
        <dbReference type="ChEBI" id="CHEBI:57483"/>
        <dbReference type="ChEBI" id="CHEBI:60203"/>
        <dbReference type="ChEBI" id="CHEBI:60204"/>
        <dbReference type="EC" id="5.3.1.28"/>
    </reaction>
</comment>
<comment type="cofactor">
    <cofactor evidence="1">
        <name>Zn(2+)</name>
        <dbReference type="ChEBI" id="CHEBI:29105"/>
    </cofactor>
    <text evidence="1">Binds 1 zinc ion per subunit.</text>
</comment>
<comment type="pathway">
    <text evidence="1">Carbohydrate biosynthesis; D-glycero-D-manno-heptose 7-phosphate biosynthesis; D-glycero-alpha-D-manno-heptose 7-phosphate and D-glycero-beta-D-manno-heptose 7-phosphate from sedoheptulose 7-phosphate: step 1/1.</text>
</comment>
<comment type="subcellular location">
    <subcellularLocation>
        <location evidence="1">Cytoplasm</location>
    </subcellularLocation>
</comment>
<comment type="miscellaneous">
    <text evidence="1">The reaction produces a racemic mixture of D-glycero-alpha-D-manno-heptose 7-phosphate and D-glycero-beta-D-manno-heptose 7-phosphate.</text>
</comment>
<comment type="similarity">
    <text evidence="1">Belongs to the SIS family. GmhA subfamily.</text>
</comment>
<reference key="1">
    <citation type="journal article" date="2011" name="PLoS ONE">
        <title>The genome of Akkermansia muciniphila, a dedicated intestinal mucin degrader, and its use in exploring intestinal metagenomes.</title>
        <authorList>
            <person name="van Passel M.W."/>
            <person name="Kant R."/>
            <person name="Zoetendal E.G."/>
            <person name="Plugge C.M."/>
            <person name="Derrien M."/>
            <person name="Malfatti S.A."/>
            <person name="Chain P.S."/>
            <person name="Woyke T."/>
            <person name="Palva A."/>
            <person name="de Vos W.M."/>
            <person name="Smidt H."/>
        </authorList>
    </citation>
    <scope>NUCLEOTIDE SEQUENCE [LARGE SCALE GENOMIC DNA]</scope>
    <source>
        <strain>ATCC BAA-835 / DSM 22959 / JCM 33894 / BCRC 81048 / CCUG 64013 / CIP 107961 / Muc</strain>
    </source>
</reference>
<dbReference type="EC" id="5.3.1.28" evidence="1"/>
<dbReference type="EMBL" id="CP001071">
    <property type="protein sequence ID" value="ACD04252.1"/>
    <property type="molecule type" value="Genomic_DNA"/>
</dbReference>
<dbReference type="RefSeq" id="WP_012419467.1">
    <property type="nucleotide sequence ID" value="NZ_CP071807.1"/>
</dbReference>
<dbReference type="SMR" id="B2UNE0"/>
<dbReference type="STRING" id="349741.Amuc_0414"/>
<dbReference type="PaxDb" id="349741-Amuc_0414"/>
<dbReference type="GeneID" id="60879879"/>
<dbReference type="KEGG" id="amu:Amuc_0414"/>
<dbReference type="eggNOG" id="COG0279">
    <property type="taxonomic scope" value="Bacteria"/>
</dbReference>
<dbReference type="HOGENOM" id="CLU_080999_4_0_0"/>
<dbReference type="OrthoDB" id="9781311at2"/>
<dbReference type="BioCyc" id="AMUC349741:G1GBX-457-MONOMER"/>
<dbReference type="UniPathway" id="UPA00041">
    <property type="reaction ID" value="UER00436"/>
</dbReference>
<dbReference type="Proteomes" id="UP000001031">
    <property type="component" value="Chromosome"/>
</dbReference>
<dbReference type="GO" id="GO:0005737">
    <property type="term" value="C:cytoplasm"/>
    <property type="evidence" value="ECO:0007669"/>
    <property type="project" value="UniProtKB-SubCell"/>
</dbReference>
<dbReference type="GO" id="GO:0097367">
    <property type="term" value="F:carbohydrate derivative binding"/>
    <property type="evidence" value="ECO:0007669"/>
    <property type="project" value="InterPro"/>
</dbReference>
<dbReference type="GO" id="GO:0008968">
    <property type="term" value="F:D-sedoheptulose 7-phosphate isomerase activity"/>
    <property type="evidence" value="ECO:0007669"/>
    <property type="project" value="UniProtKB-UniRule"/>
</dbReference>
<dbReference type="GO" id="GO:0008270">
    <property type="term" value="F:zinc ion binding"/>
    <property type="evidence" value="ECO:0007669"/>
    <property type="project" value="UniProtKB-UniRule"/>
</dbReference>
<dbReference type="GO" id="GO:0005975">
    <property type="term" value="P:carbohydrate metabolic process"/>
    <property type="evidence" value="ECO:0007669"/>
    <property type="project" value="UniProtKB-UniRule"/>
</dbReference>
<dbReference type="GO" id="GO:2001061">
    <property type="term" value="P:D-glycero-D-manno-heptose 7-phosphate biosynthetic process"/>
    <property type="evidence" value="ECO:0007669"/>
    <property type="project" value="UniProtKB-UniPathway"/>
</dbReference>
<dbReference type="CDD" id="cd05006">
    <property type="entry name" value="SIS_GmhA"/>
    <property type="match status" value="1"/>
</dbReference>
<dbReference type="Gene3D" id="3.40.50.10490">
    <property type="entry name" value="Glucose-6-phosphate isomerase like protein, domain 1"/>
    <property type="match status" value="1"/>
</dbReference>
<dbReference type="HAMAP" id="MF_00067">
    <property type="entry name" value="GmhA"/>
    <property type="match status" value="1"/>
</dbReference>
<dbReference type="InterPro" id="IPR035461">
    <property type="entry name" value="GmhA/DiaA"/>
</dbReference>
<dbReference type="InterPro" id="IPR004515">
    <property type="entry name" value="Phosphoheptose_Isoase"/>
</dbReference>
<dbReference type="InterPro" id="IPR001347">
    <property type="entry name" value="SIS_dom"/>
</dbReference>
<dbReference type="InterPro" id="IPR046348">
    <property type="entry name" value="SIS_dom_sf"/>
</dbReference>
<dbReference type="InterPro" id="IPR050099">
    <property type="entry name" value="SIS_GmhA/DiaA_subfam"/>
</dbReference>
<dbReference type="NCBIfam" id="TIGR00441">
    <property type="entry name" value="gmhA"/>
    <property type="match status" value="1"/>
</dbReference>
<dbReference type="PANTHER" id="PTHR30390:SF6">
    <property type="entry name" value="DNAA INITIATOR-ASSOCIATING PROTEIN DIAA"/>
    <property type="match status" value="1"/>
</dbReference>
<dbReference type="PANTHER" id="PTHR30390">
    <property type="entry name" value="SEDOHEPTULOSE 7-PHOSPHATE ISOMERASE / DNAA INITIATOR-ASSOCIATING FACTOR FOR REPLICATION INITIATION"/>
    <property type="match status" value="1"/>
</dbReference>
<dbReference type="Pfam" id="PF13580">
    <property type="entry name" value="SIS_2"/>
    <property type="match status" value="1"/>
</dbReference>
<dbReference type="SUPFAM" id="SSF53697">
    <property type="entry name" value="SIS domain"/>
    <property type="match status" value="1"/>
</dbReference>
<dbReference type="PROSITE" id="PS51464">
    <property type="entry name" value="SIS"/>
    <property type="match status" value="1"/>
</dbReference>
<protein>
    <recommendedName>
        <fullName evidence="1">Phosphoheptose isomerase</fullName>
        <ecNumber evidence="1">5.3.1.28</ecNumber>
    </recommendedName>
    <alternativeName>
        <fullName evidence="1">Sedoheptulose 7-phosphate isomerase</fullName>
    </alternativeName>
</protein>